<accession>Q9V4Q0</accession>
<proteinExistence type="predicted"/>
<evidence type="ECO:0000250" key="1"/>
<evidence type="ECO:0000255" key="2"/>
<evidence type="ECO:0000269" key="3">
    <source>
    </source>
</evidence>
<evidence type="ECO:0000303" key="4">
    <source>
    </source>
</evidence>
<evidence type="ECO:0000305" key="5"/>
<evidence type="ECO:0000312" key="6">
    <source>
        <dbReference type="FlyBase" id="FBgn0033202"/>
    </source>
</evidence>
<sequence length="430" mass="50620">MSTGSHSPEAMWSATNFRRHQRKPNQVLHRWFFKGSAWIIYAIACGLHFFKLHYNERTNQVEESQYHRIWSKIVVVLKVILLASPYLQYFVLGLGIYIHITLVQDSKAQNFLMSLIVLGIVIGVLRRLLIFLHLKRDRRFLKHTVNEILHITSALEQKFGMEYKCDSTLLVVYLAKLWILTVMLDSLWYKPYFLSSIFLYWVLLEYCFAGYFIYQLILLSWYHTIILFLQRFIEDHANRLDIELHYHRRLIPLFELHLRINNLHKHVRDNVSWLSTSVYLMIFTCIFNAELLIECSLFAGDELENKIYIITDGCLGPVCVPILYVLILGMCTDRFRDAEVQLQQLFVIVQGLYMRKVRPHLLIAMVLENEHTSLIIHQKLKPLENMIILDITCDREFVMDYIVTVILTALSLVQYTISTGGNISECVTHK</sequence>
<organism>
    <name type="scientific">Drosophila melanogaster</name>
    <name type="common">Fruit fly</name>
    <dbReference type="NCBI Taxonomy" id="7227"/>
    <lineage>
        <taxon>Eukaryota</taxon>
        <taxon>Metazoa</taxon>
        <taxon>Ecdysozoa</taxon>
        <taxon>Arthropoda</taxon>
        <taxon>Hexapoda</taxon>
        <taxon>Insecta</taxon>
        <taxon>Pterygota</taxon>
        <taxon>Neoptera</taxon>
        <taxon>Endopterygota</taxon>
        <taxon>Diptera</taxon>
        <taxon>Brachycera</taxon>
        <taxon>Muscomorpha</taxon>
        <taxon>Ephydroidea</taxon>
        <taxon>Drosophilidae</taxon>
        <taxon>Drosophila</taxon>
        <taxon>Sophophora</taxon>
    </lineage>
</organism>
<reference key="1">
    <citation type="journal article" date="2000" name="Science">
        <title>The genome sequence of Drosophila melanogaster.</title>
        <authorList>
            <person name="Adams M.D."/>
            <person name="Celniker S.E."/>
            <person name="Holt R.A."/>
            <person name="Evans C.A."/>
            <person name="Gocayne J.D."/>
            <person name="Amanatides P.G."/>
            <person name="Scherer S.E."/>
            <person name="Li P.W."/>
            <person name="Hoskins R.A."/>
            <person name="Galle R.F."/>
            <person name="George R.A."/>
            <person name="Lewis S.E."/>
            <person name="Richards S."/>
            <person name="Ashburner M."/>
            <person name="Henderson S.N."/>
            <person name="Sutton G.G."/>
            <person name="Wortman J.R."/>
            <person name="Yandell M.D."/>
            <person name="Zhang Q."/>
            <person name="Chen L.X."/>
            <person name="Brandon R.C."/>
            <person name="Rogers Y.-H.C."/>
            <person name="Blazej R.G."/>
            <person name="Champe M."/>
            <person name="Pfeiffer B.D."/>
            <person name="Wan K.H."/>
            <person name="Doyle C."/>
            <person name="Baxter E.G."/>
            <person name="Helt G."/>
            <person name="Nelson C.R."/>
            <person name="Miklos G.L.G."/>
            <person name="Abril J.F."/>
            <person name="Agbayani A."/>
            <person name="An H.-J."/>
            <person name="Andrews-Pfannkoch C."/>
            <person name="Baldwin D."/>
            <person name="Ballew R.M."/>
            <person name="Basu A."/>
            <person name="Baxendale J."/>
            <person name="Bayraktaroglu L."/>
            <person name="Beasley E.M."/>
            <person name="Beeson K.Y."/>
            <person name="Benos P.V."/>
            <person name="Berman B.P."/>
            <person name="Bhandari D."/>
            <person name="Bolshakov S."/>
            <person name="Borkova D."/>
            <person name="Botchan M.R."/>
            <person name="Bouck J."/>
            <person name="Brokstein P."/>
            <person name="Brottier P."/>
            <person name="Burtis K.C."/>
            <person name="Busam D.A."/>
            <person name="Butler H."/>
            <person name="Cadieu E."/>
            <person name="Center A."/>
            <person name="Chandra I."/>
            <person name="Cherry J.M."/>
            <person name="Cawley S."/>
            <person name="Dahlke C."/>
            <person name="Davenport L.B."/>
            <person name="Davies P."/>
            <person name="de Pablos B."/>
            <person name="Delcher A."/>
            <person name="Deng Z."/>
            <person name="Mays A.D."/>
            <person name="Dew I."/>
            <person name="Dietz S.M."/>
            <person name="Dodson K."/>
            <person name="Doup L.E."/>
            <person name="Downes M."/>
            <person name="Dugan-Rocha S."/>
            <person name="Dunkov B.C."/>
            <person name="Dunn P."/>
            <person name="Durbin K.J."/>
            <person name="Evangelista C.C."/>
            <person name="Ferraz C."/>
            <person name="Ferriera S."/>
            <person name="Fleischmann W."/>
            <person name="Fosler C."/>
            <person name="Gabrielian A.E."/>
            <person name="Garg N.S."/>
            <person name="Gelbart W.M."/>
            <person name="Glasser K."/>
            <person name="Glodek A."/>
            <person name="Gong F."/>
            <person name="Gorrell J.H."/>
            <person name="Gu Z."/>
            <person name="Guan P."/>
            <person name="Harris M."/>
            <person name="Harris N.L."/>
            <person name="Harvey D.A."/>
            <person name="Heiman T.J."/>
            <person name="Hernandez J.R."/>
            <person name="Houck J."/>
            <person name="Hostin D."/>
            <person name="Houston K.A."/>
            <person name="Howland T.J."/>
            <person name="Wei M.-H."/>
            <person name="Ibegwam C."/>
            <person name="Jalali M."/>
            <person name="Kalush F."/>
            <person name="Karpen G.H."/>
            <person name="Ke Z."/>
            <person name="Kennison J.A."/>
            <person name="Ketchum K.A."/>
            <person name="Kimmel B.E."/>
            <person name="Kodira C.D."/>
            <person name="Kraft C.L."/>
            <person name="Kravitz S."/>
            <person name="Kulp D."/>
            <person name="Lai Z."/>
            <person name="Lasko P."/>
            <person name="Lei Y."/>
            <person name="Levitsky A.A."/>
            <person name="Li J.H."/>
            <person name="Li Z."/>
            <person name="Liang Y."/>
            <person name="Lin X."/>
            <person name="Liu X."/>
            <person name="Mattei B."/>
            <person name="McIntosh T.C."/>
            <person name="McLeod M.P."/>
            <person name="McPherson D."/>
            <person name="Merkulov G."/>
            <person name="Milshina N.V."/>
            <person name="Mobarry C."/>
            <person name="Morris J."/>
            <person name="Moshrefi A."/>
            <person name="Mount S.M."/>
            <person name="Moy M."/>
            <person name="Murphy B."/>
            <person name="Murphy L."/>
            <person name="Muzny D.M."/>
            <person name="Nelson D.L."/>
            <person name="Nelson D.R."/>
            <person name="Nelson K.A."/>
            <person name="Nixon K."/>
            <person name="Nusskern D.R."/>
            <person name="Pacleb J.M."/>
            <person name="Palazzolo M."/>
            <person name="Pittman G.S."/>
            <person name="Pan S."/>
            <person name="Pollard J."/>
            <person name="Puri V."/>
            <person name="Reese M.G."/>
            <person name="Reinert K."/>
            <person name="Remington K."/>
            <person name="Saunders R.D.C."/>
            <person name="Scheeler F."/>
            <person name="Shen H."/>
            <person name="Shue B.C."/>
            <person name="Siden-Kiamos I."/>
            <person name="Simpson M."/>
            <person name="Skupski M.P."/>
            <person name="Smith T.J."/>
            <person name="Spier E."/>
            <person name="Spradling A.C."/>
            <person name="Stapleton M."/>
            <person name="Strong R."/>
            <person name="Sun E."/>
            <person name="Svirskas R."/>
            <person name="Tector C."/>
            <person name="Turner R."/>
            <person name="Venter E."/>
            <person name="Wang A.H."/>
            <person name="Wang X."/>
            <person name="Wang Z.-Y."/>
            <person name="Wassarman D.A."/>
            <person name="Weinstock G.M."/>
            <person name="Weissenbach J."/>
            <person name="Williams S.M."/>
            <person name="Woodage T."/>
            <person name="Worley K.C."/>
            <person name="Wu D."/>
            <person name="Yang S."/>
            <person name="Yao Q.A."/>
            <person name="Ye J."/>
            <person name="Yeh R.-F."/>
            <person name="Zaveri J.S."/>
            <person name="Zhan M."/>
            <person name="Zhang G."/>
            <person name="Zhao Q."/>
            <person name="Zheng L."/>
            <person name="Zheng X.H."/>
            <person name="Zhong F.N."/>
            <person name="Zhong W."/>
            <person name="Zhou X."/>
            <person name="Zhu S.C."/>
            <person name="Zhu X."/>
            <person name="Smith H.O."/>
            <person name="Gibbs R.A."/>
            <person name="Myers E.W."/>
            <person name="Rubin G.M."/>
            <person name="Venter J.C."/>
        </authorList>
    </citation>
    <scope>NUCLEOTIDE SEQUENCE [LARGE SCALE GENOMIC DNA]</scope>
    <source>
        <strain>Berkeley</strain>
    </source>
</reference>
<reference key="2">
    <citation type="journal article" date="2002" name="Genome Biol.">
        <title>Annotation of the Drosophila melanogaster euchromatic genome: a systematic review.</title>
        <authorList>
            <person name="Misra S."/>
            <person name="Crosby M.A."/>
            <person name="Mungall C.J."/>
            <person name="Matthews B.B."/>
            <person name="Campbell K.S."/>
            <person name="Hradecky P."/>
            <person name="Huang Y."/>
            <person name="Kaminker J.S."/>
            <person name="Millburn G.H."/>
            <person name="Prochnik S.E."/>
            <person name="Smith C.D."/>
            <person name="Tupy J.L."/>
            <person name="Whitfield E.J."/>
            <person name="Bayraktaroglu L."/>
            <person name="Berman B.P."/>
            <person name="Bettencourt B.R."/>
            <person name="Celniker S.E."/>
            <person name="de Grey A.D.N.J."/>
            <person name="Drysdale R.A."/>
            <person name="Harris N.L."/>
            <person name="Richter J."/>
            <person name="Russo S."/>
            <person name="Schroeder A.J."/>
            <person name="Shu S.Q."/>
            <person name="Stapleton M."/>
            <person name="Yamada C."/>
            <person name="Ashburner M."/>
            <person name="Gelbart W.M."/>
            <person name="Rubin G.M."/>
            <person name="Lewis S.E."/>
        </authorList>
    </citation>
    <scope>GENOME REANNOTATION</scope>
    <source>
        <strain>Berkeley</strain>
    </source>
</reference>
<reference key="3">
    <citation type="journal article" date="2023" name="Elife">
        <title>Structural screens identify candidate human homologs of insect chemoreceptors and cryptic Drosophila gustatory receptor-like proteins.</title>
        <authorList>
            <person name="Benton R."/>
            <person name="Himmel N.J."/>
        </authorList>
    </citation>
    <scope>IDENTIFICATION AS GUSTATORY RECEPTOR-LIKE PROTEIN</scope>
</reference>
<keyword id="KW-1003">Cell membrane</keyword>
<keyword id="KW-0325">Glycoprotein</keyword>
<keyword id="KW-0472">Membrane</keyword>
<keyword id="KW-1185">Reference proteome</keyword>
<keyword id="KW-0812">Transmembrane</keyword>
<keyword id="KW-1133">Transmembrane helix</keyword>
<name>GL43A_DROME</name>
<dbReference type="EMBL" id="AE013599">
    <property type="protein sequence ID" value="AAF59215.4"/>
    <property type="molecule type" value="Genomic_DNA"/>
</dbReference>
<dbReference type="RefSeq" id="NP_610307.2">
    <property type="nucleotide sequence ID" value="NM_136463.2"/>
</dbReference>
<dbReference type="BioGRID" id="61579">
    <property type="interactions" value="1"/>
</dbReference>
<dbReference type="DIP" id="DIP-21241N"/>
<dbReference type="IntAct" id="Q9V4Q0">
    <property type="interactions" value="2"/>
</dbReference>
<dbReference type="STRING" id="7227.FBpp0312485"/>
<dbReference type="GlyGen" id="Q9V4Q0">
    <property type="glycosylation" value="1 site"/>
</dbReference>
<dbReference type="PaxDb" id="7227-FBpp0088019"/>
<dbReference type="EnsemblMetazoa" id="FBtr0347154">
    <property type="protein sequence ID" value="FBpp0312485"/>
    <property type="gene ID" value="FBgn0033202"/>
</dbReference>
<dbReference type="GeneID" id="35705"/>
<dbReference type="KEGG" id="dme:Dmel_CG1339"/>
<dbReference type="UCSC" id="CG1339-RA">
    <property type="organism name" value="d. melanogaster"/>
</dbReference>
<dbReference type="AGR" id="FB:FBgn0033202"/>
<dbReference type="CTD" id="35705"/>
<dbReference type="FlyBase" id="FBgn0033202">
    <property type="gene designation" value="Grl43a"/>
</dbReference>
<dbReference type="VEuPathDB" id="VectorBase:FBgn0033202"/>
<dbReference type="eggNOG" id="ENOG502RTNY">
    <property type="taxonomic scope" value="Eukaryota"/>
</dbReference>
<dbReference type="GeneTree" id="ENSGT00540000073694"/>
<dbReference type="HOGENOM" id="CLU_656006_0_0_1"/>
<dbReference type="InParanoid" id="Q9V4Q0"/>
<dbReference type="OrthoDB" id="7851609at2759"/>
<dbReference type="PhylomeDB" id="Q9V4Q0"/>
<dbReference type="BioGRID-ORCS" id="35705">
    <property type="hits" value="0 hits in 1 CRISPR screen"/>
</dbReference>
<dbReference type="GenomeRNAi" id="35705"/>
<dbReference type="PRO" id="PR:Q9V4Q0"/>
<dbReference type="Proteomes" id="UP000000803">
    <property type="component" value="Chromosome 2R"/>
</dbReference>
<dbReference type="GO" id="GO:0016020">
    <property type="term" value="C:membrane"/>
    <property type="evidence" value="ECO:0000255"/>
    <property type="project" value="FlyBase"/>
</dbReference>
<dbReference type="GO" id="GO:0005886">
    <property type="term" value="C:plasma membrane"/>
    <property type="evidence" value="ECO:0007669"/>
    <property type="project" value="UniProtKB-SubCell"/>
</dbReference>
<dbReference type="GO" id="GO:0022834">
    <property type="term" value="F:ligand-gated channel activity"/>
    <property type="evidence" value="ECO:0000255"/>
    <property type="project" value="FlyBase"/>
</dbReference>
<dbReference type="GO" id="GO:0055085">
    <property type="term" value="P:transmembrane transport"/>
    <property type="evidence" value="ECO:0000255"/>
    <property type="project" value="FlyBase"/>
</dbReference>
<gene>
    <name evidence="4 6" type="primary">Grl43a</name>
    <name evidence="6" type="ORF">CG1339</name>
</gene>
<feature type="chain" id="PRO_0000216515" description="Gustatory receptor-like 43a">
    <location>
        <begin position="1"/>
        <end position="430"/>
    </location>
</feature>
<feature type="topological domain" description="Cytoplasmic" evidence="1">
    <location>
        <begin position="1"/>
        <end position="31"/>
    </location>
</feature>
<feature type="transmembrane region" description="Helical; Name=1" evidence="2">
    <location>
        <begin position="32"/>
        <end position="52"/>
    </location>
</feature>
<feature type="topological domain" description="Extracellular" evidence="1">
    <location>
        <begin position="53"/>
        <end position="79"/>
    </location>
</feature>
<feature type="transmembrane region" description="Helical; Name=2" evidence="2">
    <location>
        <begin position="80"/>
        <end position="100"/>
    </location>
</feature>
<feature type="topological domain" description="Cytoplasmic" evidence="1">
    <location>
        <begin position="101"/>
        <end position="110"/>
    </location>
</feature>
<feature type="transmembrane region" description="Helical; Name=3" evidence="2">
    <location>
        <begin position="111"/>
        <end position="131"/>
    </location>
</feature>
<feature type="topological domain" description="Extracellular" evidence="1">
    <location>
        <begin position="132"/>
        <end position="168"/>
    </location>
</feature>
<feature type="transmembrane region" description="Helical; Name=4" evidence="2">
    <location>
        <begin position="169"/>
        <end position="189"/>
    </location>
</feature>
<feature type="topological domain" description="Cytoplasmic" evidence="1">
    <location>
        <begin position="190"/>
        <end position="277"/>
    </location>
</feature>
<feature type="transmembrane region" description="Helical; Name=5" evidence="2">
    <location>
        <begin position="278"/>
        <end position="298"/>
    </location>
</feature>
<feature type="topological domain" description="Extracellular" evidence="1">
    <location>
        <begin position="299"/>
        <end position="306"/>
    </location>
</feature>
<feature type="transmembrane region" description="Helical; Name=6" evidence="2">
    <location>
        <begin position="307"/>
        <end position="327"/>
    </location>
</feature>
<feature type="topological domain" description="Cytoplasmic" evidence="1">
    <location>
        <begin position="328"/>
        <end position="396"/>
    </location>
</feature>
<feature type="transmembrane region" description="Helical; Name=7" evidence="2">
    <location>
        <begin position="397"/>
        <end position="417"/>
    </location>
</feature>
<feature type="topological domain" description="Extracellular" evidence="1">
    <location>
        <begin position="418"/>
        <end position="430"/>
    </location>
</feature>
<feature type="glycosylation site" description="N-linked (GlcNAc...) asparagine" evidence="2">
    <location>
        <position position="422"/>
    </location>
</feature>
<comment type="subcellular location">
    <subcellularLocation>
        <location evidence="5">Cell membrane</location>
        <topology evidence="5">Multi-pass membrane protein</topology>
    </subcellularLocation>
</comment>
<comment type="miscellaneous">
    <text evidence="3">Gustatory receptor-like proteins are divergent proteins which do not belong to the canonical gustatory receptor or olfactory receptor families but display some structural similarity (PubMed:36803935). They are predicted to be ligand-gated seven transmembrane domain ion channels (PubMed:36803935).</text>
</comment>
<protein>
    <recommendedName>
        <fullName evidence="4">Gustatory receptor-like 43a</fullName>
    </recommendedName>
</protein>